<organism>
    <name type="scientific">Elephas maximus</name>
    <name type="common">Indian elephant</name>
    <dbReference type="NCBI Taxonomy" id="9783"/>
    <lineage>
        <taxon>Eukaryota</taxon>
        <taxon>Metazoa</taxon>
        <taxon>Chordata</taxon>
        <taxon>Craniata</taxon>
        <taxon>Vertebrata</taxon>
        <taxon>Euteleostomi</taxon>
        <taxon>Mammalia</taxon>
        <taxon>Eutheria</taxon>
        <taxon>Afrotheria</taxon>
        <taxon>Proboscidea</taxon>
        <taxon>Elephantidae</taxon>
        <taxon>Elephas</taxon>
    </lineage>
</organism>
<geneLocation type="mitochondrion"/>
<comment type="function">
    <text evidence="1">Core subunit of the mitochondrial membrane respiratory chain NADH dehydrogenase (Complex I) which catalyzes electron transfer from NADH through the respiratory chain, using ubiquinone as an electron acceptor. Essential for the catalytic activity and assembly of complex I.</text>
</comment>
<comment type="catalytic activity">
    <reaction evidence="1">
        <text>a ubiquinone + NADH + 5 H(+)(in) = a ubiquinol + NAD(+) + 4 H(+)(out)</text>
        <dbReference type="Rhea" id="RHEA:29091"/>
        <dbReference type="Rhea" id="RHEA-COMP:9565"/>
        <dbReference type="Rhea" id="RHEA-COMP:9566"/>
        <dbReference type="ChEBI" id="CHEBI:15378"/>
        <dbReference type="ChEBI" id="CHEBI:16389"/>
        <dbReference type="ChEBI" id="CHEBI:17976"/>
        <dbReference type="ChEBI" id="CHEBI:57540"/>
        <dbReference type="ChEBI" id="CHEBI:57945"/>
        <dbReference type="EC" id="7.1.1.2"/>
    </reaction>
</comment>
<comment type="subunit">
    <text evidence="2">Core subunit of respiratory chain NADH dehydrogenase (Complex I) which is composed of 45 different subunits.</text>
</comment>
<comment type="subcellular location">
    <subcellularLocation>
        <location evidence="2">Mitochondrion inner membrane</location>
        <topology evidence="3">Multi-pass membrane protein</topology>
    </subcellularLocation>
</comment>
<comment type="similarity">
    <text evidence="4">Belongs to the complex I subunit 6 family.</text>
</comment>
<sequence>MMYIVFIMSVLYVVGFIGFSSKPSPVYGGMSLVVSGGLGCGIIMSSGGSFLGLVVFLVYLGGMMVVFGYTIAMATEEYPETWGSNVVVLSAFLVGLLMEVFMVVWLFSGEHELVGFYFGGLESFVTLGEGGFEYVREDYSGGASLYSCGFWFLAMAGWMLFVSIFIATEITRKRY</sequence>
<protein>
    <recommendedName>
        <fullName>NADH-ubiquinone oxidoreductase chain 6</fullName>
        <ecNumber evidence="1">7.1.1.2</ecNumber>
    </recommendedName>
    <alternativeName>
        <fullName>NADH dehydrogenase subunit 6</fullName>
    </alternativeName>
</protein>
<evidence type="ECO:0000250" key="1">
    <source>
        <dbReference type="UniProtKB" id="P03923"/>
    </source>
</evidence>
<evidence type="ECO:0000250" key="2">
    <source>
        <dbReference type="UniProtKB" id="P03924"/>
    </source>
</evidence>
<evidence type="ECO:0000255" key="3"/>
<evidence type="ECO:0000305" key="4"/>
<accession>Q2I3G3</accession>
<gene>
    <name type="primary">MT-ND6</name>
    <name type="synonym">MTND6</name>
    <name type="synonym">NADH6</name>
    <name type="synonym">ND6</name>
</gene>
<feature type="chain" id="PRO_0000232856" description="NADH-ubiquinone oxidoreductase chain 6">
    <location>
        <begin position="1"/>
        <end position="175"/>
    </location>
</feature>
<feature type="transmembrane region" description="Helical" evidence="3">
    <location>
        <begin position="1"/>
        <end position="21"/>
    </location>
</feature>
<feature type="transmembrane region" description="Helical" evidence="3">
    <location>
        <begin position="24"/>
        <end position="44"/>
    </location>
</feature>
<feature type="transmembrane region" description="Helical" evidence="3">
    <location>
        <begin position="51"/>
        <end position="71"/>
    </location>
</feature>
<feature type="transmembrane region" description="Helical" evidence="3">
    <location>
        <begin position="87"/>
        <end position="107"/>
    </location>
</feature>
<feature type="transmembrane region" description="Helical" evidence="3">
    <location>
        <begin position="112"/>
        <end position="132"/>
    </location>
</feature>
<feature type="transmembrane region" description="Helical" evidence="3">
    <location>
        <begin position="148"/>
        <end position="168"/>
    </location>
</feature>
<name>NU6M_ELEMA</name>
<dbReference type="EC" id="7.1.1.2" evidence="1"/>
<dbReference type="EMBL" id="DQ316068">
    <property type="protein sequence ID" value="ABC17902.1"/>
    <property type="molecule type" value="Genomic_DNA"/>
</dbReference>
<dbReference type="RefSeq" id="YP_626378.1">
    <property type="nucleotide sequence ID" value="NC_005129.2"/>
</dbReference>
<dbReference type="SMR" id="Q2I3G3"/>
<dbReference type="GeneID" id="2610373"/>
<dbReference type="CTD" id="4541"/>
<dbReference type="GO" id="GO:0005743">
    <property type="term" value="C:mitochondrial inner membrane"/>
    <property type="evidence" value="ECO:0000250"/>
    <property type="project" value="UniProtKB"/>
</dbReference>
<dbReference type="GO" id="GO:0008137">
    <property type="term" value="F:NADH dehydrogenase (ubiquinone) activity"/>
    <property type="evidence" value="ECO:0000250"/>
    <property type="project" value="UniProtKB"/>
</dbReference>
<dbReference type="GO" id="GO:0006120">
    <property type="term" value="P:mitochondrial electron transport, NADH to ubiquinone"/>
    <property type="evidence" value="ECO:0000250"/>
    <property type="project" value="UniProtKB"/>
</dbReference>
<dbReference type="GO" id="GO:0032981">
    <property type="term" value="P:mitochondrial respiratory chain complex I assembly"/>
    <property type="evidence" value="ECO:0000250"/>
    <property type="project" value="UniProtKB"/>
</dbReference>
<dbReference type="Gene3D" id="1.20.120.1200">
    <property type="entry name" value="NADH-ubiquinone/plastoquinone oxidoreductase chain 6, subunit NuoJ"/>
    <property type="match status" value="1"/>
</dbReference>
<dbReference type="InterPro" id="IPR050269">
    <property type="entry name" value="ComplexI_Subunit6"/>
</dbReference>
<dbReference type="InterPro" id="IPR001457">
    <property type="entry name" value="NADH_UbQ/plastoQ_OxRdtase_su6"/>
</dbReference>
<dbReference type="InterPro" id="IPR042106">
    <property type="entry name" value="Nuo/plastoQ_OxRdtase_6_NuoJ"/>
</dbReference>
<dbReference type="PANTHER" id="PTHR11435">
    <property type="entry name" value="NADH UBIQUINONE OXIDOREDUCTASE SUBUNIT ND6"/>
    <property type="match status" value="1"/>
</dbReference>
<dbReference type="PANTHER" id="PTHR11435:SF1">
    <property type="entry name" value="NADH-UBIQUINONE OXIDOREDUCTASE CHAIN 6"/>
    <property type="match status" value="1"/>
</dbReference>
<dbReference type="Pfam" id="PF00499">
    <property type="entry name" value="Oxidored_q3"/>
    <property type="match status" value="1"/>
</dbReference>
<reference key="1">
    <citation type="journal article" date="2006" name="PLoS Biol.">
        <title>Complete mitochondrial genome and phylogeny of Pleistocene mammoth Mammuthus primigenius.</title>
        <authorList>
            <person name="Rogaev E.I."/>
            <person name="Moliaka Y.K."/>
            <person name="Malyarchuk B.A."/>
            <person name="Kondrashov F.A."/>
            <person name="Derenko M.V."/>
            <person name="Chumakov I."/>
            <person name="Grigorenko A.P."/>
        </authorList>
    </citation>
    <scope>NUCLEOTIDE SEQUENCE [GENOMIC DNA]</scope>
    <source>
        <tissue>Blood</tissue>
    </source>
</reference>
<keyword id="KW-0249">Electron transport</keyword>
<keyword id="KW-0472">Membrane</keyword>
<keyword id="KW-0496">Mitochondrion</keyword>
<keyword id="KW-0999">Mitochondrion inner membrane</keyword>
<keyword id="KW-0520">NAD</keyword>
<keyword id="KW-0679">Respiratory chain</keyword>
<keyword id="KW-1278">Translocase</keyword>
<keyword id="KW-0812">Transmembrane</keyword>
<keyword id="KW-1133">Transmembrane helix</keyword>
<keyword id="KW-0813">Transport</keyword>
<keyword id="KW-0830">Ubiquinone</keyword>
<proteinExistence type="inferred from homology"/>